<feature type="chain" id="PRO_1000125710" description="Glucose-6-phosphate isomerase">
    <location>
        <begin position="1"/>
        <end position="450"/>
    </location>
</feature>
<feature type="active site" description="Proton donor" evidence="1">
    <location>
        <position position="291"/>
    </location>
</feature>
<feature type="active site" evidence="1">
    <location>
        <position position="312"/>
    </location>
</feature>
<feature type="active site" evidence="1">
    <location>
        <position position="426"/>
    </location>
</feature>
<evidence type="ECO:0000255" key="1">
    <source>
        <dbReference type="HAMAP-Rule" id="MF_00473"/>
    </source>
</evidence>
<organism>
    <name type="scientific">Clostridium botulinum (strain Loch Maree / Type A3)</name>
    <dbReference type="NCBI Taxonomy" id="498214"/>
    <lineage>
        <taxon>Bacteria</taxon>
        <taxon>Bacillati</taxon>
        <taxon>Bacillota</taxon>
        <taxon>Clostridia</taxon>
        <taxon>Eubacteriales</taxon>
        <taxon>Clostridiaceae</taxon>
        <taxon>Clostridium</taxon>
    </lineage>
</organism>
<keyword id="KW-0963">Cytoplasm</keyword>
<keyword id="KW-0312">Gluconeogenesis</keyword>
<keyword id="KW-0324">Glycolysis</keyword>
<keyword id="KW-0413">Isomerase</keyword>
<sequence length="450" mass="50477">MKNSLSLDLTKTKPYVEEHEIQYLESIIREMDNTLGKKTGPGNKFLGWMDLPINYNKEEFARIKKAAEKIKNTCDVFIVIGIGGSYLGSRAAIEMISNTFYNNLDKSQRKVPQIYFAGNNISSTYMADLLELVKDKDICVNVISKSGTTTEPAIAFRIFKELLENKYGKEGAKERIFATTDAAKGALRTLADSEGYETFVIPDDVGGRFSVLTPVGLLPIAASGIDIDEMMKGAADARQEYSSDNIEKNHVYRYVAVRNALYRKGKTTEMLVNFEPCLHYFGEWWKQLYGESEGKDGKGIFPAAADFSTDLHSMGQYIQEGLRNIFETFINVENPRKSIMIKEDKENLDGLNFLAEKDMDYVNHQALRGTVLAHNDGGVPAIVLNVPELSAYYFGQLVYFFEKACGISGYLQGVNPFDQPGVEAYKKNMFALLGKPGHEDMKATLEERLK</sequence>
<comment type="function">
    <text evidence="1">Catalyzes the reversible isomerization of glucose-6-phosphate to fructose-6-phosphate.</text>
</comment>
<comment type="catalytic activity">
    <reaction evidence="1">
        <text>alpha-D-glucose 6-phosphate = beta-D-fructose 6-phosphate</text>
        <dbReference type="Rhea" id="RHEA:11816"/>
        <dbReference type="ChEBI" id="CHEBI:57634"/>
        <dbReference type="ChEBI" id="CHEBI:58225"/>
        <dbReference type="EC" id="5.3.1.9"/>
    </reaction>
</comment>
<comment type="pathway">
    <text evidence="1">Carbohydrate biosynthesis; gluconeogenesis.</text>
</comment>
<comment type="pathway">
    <text evidence="1">Carbohydrate degradation; glycolysis; D-glyceraldehyde 3-phosphate and glycerone phosphate from D-glucose: step 2/4.</text>
</comment>
<comment type="subcellular location">
    <subcellularLocation>
        <location evidence="1">Cytoplasm</location>
    </subcellularLocation>
</comment>
<comment type="similarity">
    <text evidence="1">Belongs to the GPI family.</text>
</comment>
<name>G6PI_CLOBM</name>
<dbReference type="EC" id="5.3.1.9" evidence="1"/>
<dbReference type="EMBL" id="CP000962">
    <property type="protein sequence ID" value="ACA54172.1"/>
    <property type="molecule type" value="Genomic_DNA"/>
</dbReference>
<dbReference type="RefSeq" id="WP_012342308.1">
    <property type="nucleotide sequence ID" value="NC_010520.1"/>
</dbReference>
<dbReference type="SMR" id="B1L1I1"/>
<dbReference type="KEGG" id="cbl:CLK_2695"/>
<dbReference type="HOGENOM" id="CLU_037303_0_1_9"/>
<dbReference type="UniPathway" id="UPA00109">
    <property type="reaction ID" value="UER00181"/>
</dbReference>
<dbReference type="UniPathway" id="UPA00138"/>
<dbReference type="GO" id="GO:0005829">
    <property type="term" value="C:cytosol"/>
    <property type="evidence" value="ECO:0007669"/>
    <property type="project" value="TreeGrafter"/>
</dbReference>
<dbReference type="GO" id="GO:0097367">
    <property type="term" value="F:carbohydrate derivative binding"/>
    <property type="evidence" value="ECO:0007669"/>
    <property type="project" value="InterPro"/>
</dbReference>
<dbReference type="GO" id="GO:0004347">
    <property type="term" value="F:glucose-6-phosphate isomerase activity"/>
    <property type="evidence" value="ECO:0007669"/>
    <property type="project" value="UniProtKB-UniRule"/>
</dbReference>
<dbReference type="GO" id="GO:0048029">
    <property type="term" value="F:monosaccharide binding"/>
    <property type="evidence" value="ECO:0007669"/>
    <property type="project" value="TreeGrafter"/>
</dbReference>
<dbReference type="GO" id="GO:0006094">
    <property type="term" value="P:gluconeogenesis"/>
    <property type="evidence" value="ECO:0007669"/>
    <property type="project" value="UniProtKB-UniRule"/>
</dbReference>
<dbReference type="GO" id="GO:0051156">
    <property type="term" value="P:glucose 6-phosphate metabolic process"/>
    <property type="evidence" value="ECO:0007669"/>
    <property type="project" value="TreeGrafter"/>
</dbReference>
<dbReference type="GO" id="GO:0006096">
    <property type="term" value="P:glycolytic process"/>
    <property type="evidence" value="ECO:0007669"/>
    <property type="project" value="UniProtKB-UniRule"/>
</dbReference>
<dbReference type="CDD" id="cd05015">
    <property type="entry name" value="SIS_PGI_1"/>
    <property type="match status" value="1"/>
</dbReference>
<dbReference type="CDD" id="cd05016">
    <property type="entry name" value="SIS_PGI_2"/>
    <property type="match status" value="1"/>
</dbReference>
<dbReference type="FunFam" id="3.40.50.10490:FF:000015">
    <property type="entry name" value="Glucose-6-phosphate isomerase"/>
    <property type="match status" value="1"/>
</dbReference>
<dbReference type="FunFam" id="3.40.50.10490:FF:000016">
    <property type="entry name" value="Glucose-6-phosphate isomerase"/>
    <property type="match status" value="1"/>
</dbReference>
<dbReference type="Gene3D" id="3.40.50.10490">
    <property type="entry name" value="Glucose-6-phosphate isomerase like protein, domain 1"/>
    <property type="match status" value="2"/>
</dbReference>
<dbReference type="HAMAP" id="MF_00473">
    <property type="entry name" value="G6P_isomerase"/>
    <property type="match status" value="1"/>
</dbReference>
<dbReference type="InterPro" id="IPR001672">
    <property type="entry name" value="G6P_Isomerase"/>
</dbReference>
<dbReference type="InterPro" id="IPR018189">
    <property type="entry name" value="Phosphoglucose_isomerase_CS"/>
</dbReference>
<dbReference type="InterPro" id="IPR046348">
    <property type="entry name" value="SIS_dom_sf"/>
</dbReference>
<dbReference type="InterPro" id="IPR035476">
    <property type="entry name" value="SIS_PGI_1"/>
</dbReference>
<dbReference type="InterPro" id="IPR035482">
    <property type="entry name" value="SIS_PGI_2"/>
</dbReference>
<dbReference type="NCBIfam" id="NF010697">
    <property type="entry name" value="PRK14097.1"/>
    <property type="match status" value="1"/>
</dbReference>
<dbReference type="PANTHER" id="PTHR11469">
    <property type="entry name" value="GLUCOSE-6-PHOSPHATE ISOMERASE"/>
    <property type="match status" value="1"/>
</dbReference>
<dbReference type="PANTHER" id="PTHR11469:SF1">
    <property type="entry name" value="GLUCOSE-6-PHOSPHATE ISOMERASE"/>
    <property type="match status" value="1"/>
</dbReference>
<dbReference type="Pfam" id="PF00342">
    <property type="entry name" value="PGI"/>
    <property type="match status" value="1"/>
</dbReference>
<dbReference type="PRINTS" id="PR00662">
    <property type="entry name" value="G6PISOMERASE"/>
</dbReference>
<dbReference type="SUPFAM" id="SSF53697">
    <property type="entry name" value="SIS domain"/>
    <property type="match status" value="1"/>
</dbReference>
<dbReference type="PROSITE" id="PS00765">
    <property type="entry name" value="P_GLUCOSE_ISOMERASE_1"/>
    <property type="match status" value="1"/>
</dbReference>
<dbReference type="PROSITE" id="PS51463">
    <property type="entry name" value="P_GLUCOSE_ISOMERASE_3"/>
    <property type="match status" value="1"/>
</dbReference>
<protein>
    <recommendedName>
        <fullName evidence="1">Glucose-6-phosphate isomerase</fullName>
        <shortName evidence="1">GPI</shortName>
        <ecNumber evidence="1">5.3.1.9</ecNumber>
    </recommendedName>
    <alternativeName>
        <fullName evidence="1">Phosphoglucose isomerase</fullName>
        <shortName evidence="1">PGI</shortName>
    </alternativeName>
    <alternativeName>
        <fullName evidence="1">Phosphohexose isomerase</fullName>
        <shortName evidence="1">PHI</shortName>
    </alternativeName>
</protein>
<accession>B1L1I1</accession>
<proteinExistence type="inferred from homology"/>
<gene>
    <name evidence="1" type="primary">pgi</name>
    <name type="ordered locus">CLK_2695</name>
</gene>
<reference key="1">
    <citation type="journal article" date="2007" name="PLoS ONE">
        <title>Analysis of the neurotoxin complex genes in Clostridium botulinum A1-A4 and B1 strains: BoNT/A3, /Ba4 and /B1 clusters are located within plasmids.</title>
        <authorList>
            <person name="Smith T.J."/>
            <person name="Hill K.K."/>
            <person name="Foley B.T."/>
            <person name="Detter J.C."/>
            <person name="Munk A.C."/>
            <person name="Bruce D.C."/>
            <person name="Doggett N.A."/>
            <person name="Smith L.A."/>
            <person name="Marks J.D."/>
            <person name="Xie G."/>
            <person name="Brettin T.S."/>
        </authorList>
    </citation>
    <scope>NUCLEOTIDE SEQUENCE [LARGE SCALE GENOMIC DNA]</scope>
    <source>
        <strain>Loch Maree / Type A3</strain>
    </source>
</reference>